<dbReference type="EMBL" id="CP000517">
    <property type="protein sequence ID" value="ABX26940.1"/>
    <property type="molecule type" value="Genomic_DNA"/>
</dbReference>
<dbReference type="RefSeq" id="WP_012211673.1">
    <property type="nucleotide sequence ID" value="NC_010080.1"/>
</dbReference>
<dbReference type="SMR" id="A8YUK2"/>
<dbReference type="KEGG" id="lhe:lhv_0813"/>
<dbReference type="eggNOG" id="COG0355">
    <property type="taxonomic scope" value="Bacteria"/>
</dbReference>
<dbReference type="HOGENOM" id="CLU_084338_1_0_9"/>
<dbReference type="Proteomes" id="UP000000790">
    <property type="component" value="Chromosome"/>
</dbReference>
<dbReference type="GO" id="GO:0005886">
    <property type="term" value="C:plasma membrane"/>
    <property type="evidence" value="ECO:0007669"/>
    <property type="project" value="UniProtKB-SubCell"/>
</dbReference>
<dbReference type="GO" id="GO:0045259">
    <property type="term" value="C:proton-transporting ATP synthase complex"/>
    <property type="evidence" value="ECO:0007669"/>
    <property type="project" value="UniProtKB-KW"/>
</dbReference>
<dbReference type="GO" id="GO:0005524">
    <property type="term" value="F:ATP binding"/>
    <property type="evidence" value="ECO:0007669"/>
    <property type="project" value="UniProtKB-UniRule"/>
</dbReference>
<dbReference type="GO" id="GO:0046933">
    <property type="term" value="F:proton-transporting ATP synthase activity, rotational mechanism"/>
    <property type="evidence" value="ECO:0007669"/>
    <property type="project" value="UniProtKB-UniRule"/>
</dbReference>
<dbReference type="CDD" id="cd12152">
    <property type="entry name" value="F1-ATPase_delta"/>
    <property type="match status" value="1"/>
</dbReference>
<dbReference type="Gene3D" id="1.20.5.440">
    <property type="entry name" value="ATP synthase delta/epsilon subunit, C-terminal domain"/>
    <property type="match status" value="1"/>
</dbReference>
<dbReference type="Gene3D" id="2.60.15.10">
    <property type="entry name" value="F0F1 ATP synthase delta/epsilon subunit, N-terminal"/>
    <property type="match status" value="1"/>
</dbReference>
<dbReference type="HAMAP" id="MF_00530">
    <property type="entry name" value="ATP_synth_epsil_bac"/>
    <property type="match status" value="1"/>
</dbReference>
<dbReference type="InterPro" id="IPR036794">
    <property type="entry name" value="ATP_F1_dsu/esu_C_sf"/>
</dbReference>
<dbReference type="InterPro" id="IPR001469">
    <property type="entry name" value="ATP_synth_F1_dsu/esu"/>
</dbReference>
<dbReference type="InterPro" id="IPR020546">
    <property type="entry name" value="ATP_synth_F1_dsu/esu_N"/>
</dbReference>
<dbReference type="InterPro" id="IPR020547">
    <property type="entry name" value="ATP_synth_F1_esu_C"/>
</dbReference>
<dbReference type="InterPro" id="IPR036771">
    <property type="entry name" value="ATPsynth_dsu/esu_N"/>
</dbReference>
<dbReference type="NCBIfam" id="TIGR01216">
    <property type="entry name" value="ATP_synt_epsi"/>
    <property type="match status" value="1"/>
</dbReference>
<dbReference type="NCBIfam" id="NF001846">
    <property type="entry name" value="PRK00571.1-3"/>
    <property type="match status" value="1"/>
</dbReference>
<dbReference type="PANTHER" id="PTHR13822">
    <property type="entry name" value="ATP SYNTHASE DELTA/EPSILON CHAIN"/>
    <property type="match status" value="1"/>
</dbReference>
<dbReference type="PANTHER" id="PTHR13822:SF10">
    <property type="entry name" value="ATP SYNTHASE EPSILON CHAIN, CHLOROPLASTIC"/>
    <property type="match status" value="1"/>
</dbReference>
<dbReference type="Pfam" id="PF00401">
    <property type="entry name" value="ATP-synt_DE"/>
    <property type="match status" value="1"/>
</dbReference>
<dbReference type="Pfam" id="PF02823">
    <property type="entry name" value="ATP-synt_DE_N"/>
    <property type="match status" value="1"/>
</dbReference>
<dbReference type="SUPFAM" id="SSF46604">
    <property type="entry name" value="Epsilon subunit of F1F0-ATP synthase C-terminal domain"/>
    <property type="match status" value="1"/>
</dbReference>
<dbReference type="SUPFAM" id="SSF51344">
    <property type="entry name" value="Epsilon subunit of F1F0-ATP synthase N-terminal domain"/>
    <property type="match status" value="1"/>
</dbReference>
<proteinExistence type="inferred from homology"/>
<accession>A8YUK2</accession>
<feature type="chain" id="PRO_1000072500" description="ATP synthase epsilon chain">
    <location>
        <begin position="1"/>
        <end position="146"/>
    </location>
</feature>
<protein>
    <recommendedName>
        <fullName evidence="1">ATP synthase epsilon chain</fullName>
    </recommendedName>
    <alternativeName>
        <fullName evidence="1">ATP synthase F1 sector epsilon subunit</fullName>
    </alternativeName>
    <alternativeName>
        <fullName evidence="1">F-ATPase epsilon subunit</fullName>
    </alternativeName>
</protein>
<keyword id="KW-0066">ATP synthesis</keyword>
<keyword id="KW-1003">Cell membrane</keyword>
<keyword id="KW-0139">CF(1)</keyword>
<keyword id="KW-0375">Hydrogen ion transport</keyword>
<keyword id="KW-0406">Ion transport</keyword>
<keyword id="KW-0472">Membrane</keyword>
<keyword id="KW-0813">Transport</keyword>
<reference key="1">
    <citation type="journal article" date="2008" name="J. Bacteriol.">
        <title>Genome sequence of Lactobacillus helveticus: an organism distinguished by selective gene loss and IS element expansion.</title>
        <authorList>
            <person name="Callanan M."/>
            <person name="Kaleta P."/>
            <person name="O'Callaghan J."/>
            <person name="O'Sullivan O."/>
            <person name="Jordan K."/>
            <person name="McAuliffe O."/>
            <person name="Sangrador-Vegas A."/>
            <person name="Slattery L."/>
            <person name="Fitzgerald G.F."/>
            <person name="Beresford T."/>
            <person name="Ross R.P."/>
        </authorList>
    </citation>
    <scope>NUCLEOTIDE SEQUENCE [LARGE SCALE GENOMIC DNA]</scope>
    <source>
        <strain>DPC 4571</strain>
    </source>
</reference>
<evidence type="ECO:0000255" key="1">
    <source>
        <dbReference type="HAMAP-Rule" id="MF_00530"/>
    </source>
</evidence>
<comment type="function">
    <text evidence="1">Produces ATP from ADP in the presence of a proton gradient across the membrane.</text>
</comment>
<comment type="subunit">
    <text evidence="1">F-type ATPases have 2 components, CF(1) - the catalytic core - and CF(0) - the membrane proton channel. CF(1) has five subunits: alpha(3), beta(3), gamma(1), delta(1), epsilon(1). CF(0) has three main subunits: a, b and c.</text>
</comment>
<comment type="subcellular location">
    <subcellularLocation>
        <location evidence="1">Cell membrane</location>
        <topology evidence="1">Peripheral membrane protein</topology>
    </subcellularLocation>
</comment>
<comment type="similarity">
    <text evidence="1">Belongs to the ATPase epsilon chain family.</text>
</comment>
<gene>
    <name evidence="1" type="primary">atpC</name>
    <name type="ordered locus">lhv_0813</name>
</gene>
<organism>
    <name type="scientific">Lactobacillus helveticus (strain DPC 4571)</name>
    <dbReference type="NCBI Taxonomy" id="405566"/>
    <lineage>
        <taxon>Bacteria</taxon>
        <taxon>Bacillati</taxon>
        <taxon>Bacillota</taxon>
        <taxon>Bacilli</taxon>
        <taxon>Lactobacillales</taxon>
        <taxon>Lactobacillaceae</taxon>
        <taxon>Lactobacillus</taxon>
    </lineage>
</organism>
<name>ATPE_LACH4</name>
<sequence>MADPEKLFRVDVVTPNGMIYSHRGSIVDVRAIDGERSIMYNHVPLLTPLVISEVKVKRSREMDSRIDHIAISGGYIEFSNNVATIIADSAERARNIDISRAQAAKERAEKRLKEAREKHDERTLERAEVALRRAMNRISVYNTKGH</sequence>